<comment type="function">
    <text evidence="4 5">Component of the PhsABC thiosulfate reductase that catalyzes the reduction of thiosulfate to sulfite and hydrogen sulfide, with menaquinol as the sole electron donor. Proton motive force (PMF) is required to drive transmembrane electron transfer within the reductase. The PhsA subunit contains the active site molybdenum-bis(molybdopterin guanine dinucleotide) (Mo-bis-MGD) cofactor.</text>
</comment>
<comment type="catalytic activity">
    <reaction evidence="4">
        <text>a quinone + hydrogen sulfide + sulfite + 2 H(+) = thiosulfate + a quinol</text>
        <dbReference type="Rhea" id="RHEA:50736"/>
        <dbReference type="ChEBI" id="CHEBI:15378"/>
        <dbReference type="ChEBI" id="CHEBI:17359"/>
        <dbReference type="ChEBI" id="CHEBI:24646"/>
        <dbReference type="ChEBI" id="CHEBI:29919"/>
        <dbReference type="ChEBI" id="CHEBI:33542"/>
        <dbReference type="ChEBI" id="CHEBI:132124"/>
        <dbReference type="EC" id="1.8.5.5"/>
    </reaction>
</comment>
<comment type="cofactor">
    <cofactor evidence="1">
        <name>[4Fe-4S] cluster</name>
        <dbReference type="ChEBI" id="CHEBI:49883"/>
    </cofactor>
    <text evidence="1">Binds 1 [4Fe-4S] cluster.</text>
</comment>
<comment type="cofactor">
    <cofactor evidence="1">
        <name>Mo-bis(molybdopterin guanine dinucleotide)</name>
        <dbReference type="ChEBI" id="CHEBI:60539"/>
    </cofactor>
    <text evidence="1">Binds 1 molybdenum-bis(molybdopterin guanine dinucleotide) (Mo-bis-MGD) cofactor per subunit.</text>
</comment>
<comment type="subunit">
    <text evidence="8">Composed of three subunits: PhsA, PhsB and PhsC.</text>
</comment>
<comment type="subcellular location">
    <subcellularLocation>
        <location evidence="8">Periplasm</location>
    </subcellularLocation>
</comment>
<comment type="PTM">
    <text evidence="2">Predicted to be exported by the Tat system. The position of the signal peptide cleavage has not been experimentally proven.</text>
</comment>
<comment type="similarity">
    <text evidence="7">Belongs to the prokaryotic molybdopterin-containing oxidoreductase family.</text>
</comment>
<feature type="signal peptide" description="Tat-type signal" evidence="2">
    <location>
        <begin position="1"/>
        <end position="30"/>
    </location>
</feature>
<feature type="chain" id="PRO_0000019167" description="Thiosulfate reductase molybdopterin-containing subunit PhsA">
    <location>
        <begin position="31"/>
        <end position="758"/>
    </location>
</feature>
<feature type="domain" description="4Fe-4S Mo/W bis-MGD-type" evidence="3">
    <location>
        <begin position="41"/>
        <end position="97"/>
    </location>
</feature>
<feature type="binding site" evidence="3">
    <location>
        <position position="48"/>
    </location>
    <ligand>
        <name>[4Fe-4S] cluster</name>
        <dbReference type="ChEBI" id="CHEBI:49883"/>
    </ligand>
</feature>
<feature type="binding site" evidence="3">
    <location>
        <position position="51"/>
    </location>
    <ligand>
        <name>[4Fe-4S] cluster</name>
        <dbReference type="ChEBI" id="CHEBI:49883"/>
    </ligand>
</feature>
<feature type="binding site" evidence="3">
    <location>
        <position position="55"/>
    </location>
    <ligand>
        <name>[4Fe-4S] cluster</name>
        <dbReference type="ChEBI" id="CHEBI:49883"/>
    </ligand>
</feature>
<feature type="binding site" evidence="3">
    <location>
        <position position="83"/>
    </location>
    <ligand>
        <name>[4Fe-4S] cluster</name>
        <dbReference type="ChEBI" id="CHEBI:49883"/>
    </ligand>
</feature>
<gene>
    <name evidence="6" type="primary">phsA</name>
    <name type="ordered locus">STM2065</name>
</gene>
<name>PHSA_SALTY</name>
<keyword id="KW-0004">4Fe-4S</keyword>
<keyword id="KW-0408">Iron</keyword>
<keyword id="KW-0411">Iron-sulfur</keyword>
<keyword id="KW-0479">Metal-binding</keyword>
<keyword id="KW-0500">Molybdenum</keyword>
<keyword id="KW-0560">Oxidoreductase</keyword>
<keyword id="KW-0574">Periplasm</keyword>
<keyword id="KW-1185">Reference proteome</keyword>
<keyword id="KW-0732">Signal</keyword>
<organism>
    <name type="scientific">Salmonella typhimurium (strain LT2 / SGSC1412 / ATCC 700720)</name>
    <dbReference type="NCBI Taxonomy" id="99287"/>
    <lineage>
        <taxon>Bacteria</taxon>
        <taxon>Pseudomonadati</taxon>
        <taxon>Pseudomonadota</taxon>
        <taxon>Gammaproteobacteria</taxon>
        <taxon>Enterobacterales</taxon>
        <taxon>Enterobacteriaceae</taxon>
        <taxon>Salmonella</taxon>
    </lineage>
</organism>
<reference key="1">
    <citation type="journal article" date="1995" name="J. Bacteriol.">
        <title>Sequence analysis of the phs operon in Salmonella typhimurium and the contribution of thiosulfate reduction to anaerobic energy metabolism.</title>
        <authorList>
            <person name="Heinzinger N.K."/>
            <person name="Fujimoto S.Y."/>
            <person name="Clark M.A."/>
            <person name="Moreno M.S."/>
            <person name="Barrett E.L."/>
        </authorList>
    </citation>
    <scope>NUCLEOTIDE SEQUENCE [GENOMIC DNA]</scope>
    <source>
        <strain>LT2</strain>
    </source>
</reference>
<reference key="2">
    <citation type="journal article" date="2001" name="Nature">
        <title>Complete genome sequence of Salmonella enterica serovar Typhimurium LT2.</title>
        <authorList>
            <person name="McClelland M."/>
            <person name="Sanderson K.E."/>
            <person name="Spieth J."/>
            <person name="Clifton S.W."/>
            <person name="Latreille P."/>
            <person name="Courtney L."/>
            <person name="Porwollik S."/>
            <person name="Ali J."/>
            <person name="Dante M."/>
            <person name="Du F."/>
            <person name="Hou S."/>
            <person name="Layman D."/>
            <person name="Leonard S."/>
            <person name="Nguyen C."/>
            <person name="Scott K."/>
            <person name="Holmes A."/>
            <person name="Grewal N."/>
            <person name="Mulvaney E."/>
            <person name="Ryan E."/>
            <person name="Sun H."/>
            <person name="Florea L."/>
            <person name="Miller W."/>
            <person name="Stoneking T."/>
            <person name="Nhan M."/>
            <person name="Waterston R."/>
            <person name="Wilson R.K."/>
        </authorList>
    </citation>
    <scope>NUCLEOTIDE SEQUENCE [LARGE SCALE GENOMIC DNA]</scope>
    <source>
        <strain>LT2 / SGSC1412 / ATCC 700720</strain>
    </source>
</reference>
<reference key="3">
    <citation type="journal article" date="1995" name="Gene">
        <title>Cloning and characterization of a gene cluster, phsBCDEF, necessary for the production of hydrogen sulfide from thiosulfate by Salmonella typhimurium.</title>
        <authorList>
            <person name="Alami N."/>
            <person name="Hallenbeck P.C."/>
        </authorList>
    </citation>
    <scope>NUCLEOTIDE SEQUENCE [GENOMIC DNA] OF 691-758</scope>
    <source>
        <strain>LT2</strain>
    </source>
</reference>
<reference key="4">
    <citation type="journal article" date="1987" name="J. Bacteriol.">
        <title>The phs gene and hydrogen sulfide production by Salmonella typhimurium.</title>
        <authorList>
            <person name="Clark M.A."/>
            <person name="Barrett E.L."/>
        </authorList>
    </citation>
    <scope>FUNCTION</scope>
    <source>
        <strain>LT2</strain>
    </source>
</reference>
<reference key="5">
    <citation type="journal article" date="2012" name="J. Bacteriol.">
        <title>Thiosulfate reduction in Salmonella enterica is driven by the proton motive force.</title>
        <authorList>
            <person name="Stoffels L."/>
            <person name="Krehenbrink M."/>
            <person name="Berks B.C."/>
            <person name="Unden G."/>
        </authorList>
    </citation>
    <scope>FUNCTION</scope>
    <scope>CATALYTIC ACTIVITY</scope>
    <scope>SUBUNIT</scope>
    <scope>SUBCELLULAR LOCATION</scope>
    <source>
        <strain>LT2</strain>
    </source>
</reference>
<sequence length="758" mass="82800">MSISRRSFLQGVGIGCSACALGAFPPGALARNPIAGINGKTTLTPSLCEMCSFRCPIQAQVVNNKTVFIQGNPSAPQQGTRICARGGSGVSLVNDPQRIVKPMKRTGPRGDGEWQVISWQQAYQEIAAKMNAIKAQHGPESVAFSSKSGSLSSHLFHLATAFGSPNTFTHASTCPAGKAIAAKVMMGGDLAMDIANTRYLVSFGHNLYEGIEVADTHELMTAQEKGAKMVSFDPRLSIFSSKADEWHAIRPGGDLAVLLAMCHVMIDEQLYDASFVERYTSGFEQLAQAVKETTPEWAAAQADVPADVIVRVTRELAACAPHAIVSPGHRATFSQEEIDMRRMIFTLNVLLGNIEREGGLYQKKNASVYNKLAGEKVAPTLAKLNIKNMPKPTAQRIDLVAPQFKYIAAGGGVVQSIIDSALTQKPYPIKAWIMSRHNPFQTVTCRSDLVKTVEQLDLVVSCDVYLSESAAYADYLLPECTYLERDEEVSDMSGLHPAYALRQQVVEPIGEARPSWQIWKELGEQLGLGQYYPWQDMQTRQLYQLNGDHALAKELRQKGYLEWGVPLLLREPESVRQFTARYPGAIATDSDNTYGEQLRFKSPSGKIELYSATLEELLPGYGVPRVRDFALKKENELYFIQGKVAVHTNGATQYVPLLSELMWDNAVWVHPQTAQEKGIKTGDEIWLENATGKEKGKALVTPGIRPDTLFVYMGFGAKAGAKTAATTHGIHCGNLLPHVTSPVSGTVVHTAGVTLSRA</sequence>
<proteinExistence type="evidence at protein level"/>
<dbReference type="EC" id="1.8.5.5" evidence="4"/>
<dbReference type="EMBL" id="L32188">
    <property type="protein sequence ID" value="AAC36934.1"/>
    <property type="molecule type" value="Genomic_DNA"/>
</dbReference>
<dbReference type="EMBL" id="AE006468">
    <property type="protein sequence ID" value="AAL20969.1"/>
    <property type="molecule type" value="Genomic_DNA"/>
</dbReference>
<dbReference type="EMBL" id="L31538">
    <property type="protein sequence ID" value="AAA68431.1"/>
    <property type="molecule type" value="Genomic_DNA"/>
</dbReference>
<dbReference type="PIR" id="A57143">
    <property type="entry name" value="A57143"/>
</dbReference>
<dbReference type="RefSeq" id="NP_461010.1">
    <property type="nucleotide sequence ID" value="NC_003197.2"/>
</dbReference>
<dbReference type="RefSeq" id="WP_000028228.1">
    <property type="nucleotide sequence ID" value="NC_003197.2"/>
</dbReference>
<dbReference type="SMR" id="P37600"/>
<dbReference type="STRING" id="99287.STM2065"/>
<dbReference type="TCDB" id="5.A.3.5.1">
    <property type="family name" value="the prokaryotic molybdopterin-containing oxidoreductase (pmo) family"/>
</dbReference>
<dbReference type="PaxDb" id="99287-STM2065"/>
<dbReference type="GeneID" id="1253586"/>
<dbReference type="KEGG" id="stm:STM2065"/>
<dbReference type="PATRIC" id="fig|99287.12.peg.2187"/>
<dbReference type="HOGENOM" id="CLU_000422_13_3_6"/>
<dbReference type="OMA" id="ASICEMC"/>
<dbReference type="PhylomeDB" id="P37600"/>
<dbReference type="BioCyc" id="MetaCyc:MONOMER-12529"/>
<dbReference type="BioCyc" id="SENT99287:STM2065-MONOMER"/>
<dbReference type="BRENDA" id="1.8.5.5">
    <property type="organism ID" value="5542"/>
</dbReference>
<dbReference type="Proteomes" id="UP000001014">
    <property type="component" value="Chromosome"/>
</dbReference>
<dbReference type="GO" id="GO:0042597">
    <property type="term" value="C:periplasmic space"/>
    <property type="evidence" value="ECO:0007669"/>
    <property type="project" value="UniProtKB-SubCell"/>
</dbReference>
<dbReference type="GO" id="GO:0051539">
    <property type="term" value="F:4 iron, 4 sulfur cluster binding"/>
    <property type="evidence" value="ECO:0007669"/>
    <property type="project" value="UniProtKB-KW"/>
</dbReference>
<dbReference type="GO" id="GO:0046872">
    <property type="term" value="F:metal ion binding"/>
    <property type="evidence" value="ECO:0007669"/>
    <property type="project" value="UniProtKB-KW"/>
</dbReference>
<dbReference type="GO" id="GO:0043546">
    <property type="term" value="F:molybdopterin cofactor binding"/>
    <property type="evidence" value="ECO:0007669"/>
    <property type="project" value="InterPro"/>
</dbReference>
<dbReference type="GO" id="GO:0016491">
    <property type="term" value="F:oxidoreductase activity"/>
    <property type="evidence" value="ECO:0007669"/>
    <property type="project" value="UniProtKB-KW"/>
</dbReference>
<dbReference type="CDD" id="cd02778">
    <property type="entry name" value="MopB_CT_Thiosulfate-R-like"/>
    <property type="match status" value="1"/>
</dbReference>
<dbReference type="CDD" id="cd02755">
    <property type="entry name" value="MopB_Thiosulfate-R-like"/>
    <property type="match status" value="1"/>
</dbReference>
<dbReference type="FunFam" id="2.20.25.90:FF:000005">
    <property type="entry name" value="Thiosulfate reductase PhsA"/>
    <property type="match status" value="1"/>
</dbReference>
<dbReference type="FunFam" id="2.40.40.20:FF:000022">
    <property type="entry name" value="Thiosulfate reductase PhsA"/>
    <property type="match status" value="1"/>
</dbReference>
<dbReference type="FunFam" id="3.40.228.10:FF:000008">
    <property type="entry name" value="Thiosulfate reductase PhsA"/>
    <property type="match status" value="1"/>
</dbReference>
<dbReference type="Gene3D" id="2.40.40.20">
    <property type="match status" value="1"/>
</dbReference>
<dbReference type="Gene3D" id="3.40.50.740">
    <property type="match status" value="1"/>
</dbReference>
<dbReference type="Gene3D" id="2.20.25.90">
    <property type="entry name" value="ADC-like domains"/>
    <property type="match status" value="1"/>
</dbReference>
<dbReference type="Gene3D" id="3.40.228.10">
    <property type="entry name" value="Dimethylsulfoxide Reductase, domain 2"/>
    <property type="match status" value="1"/>
</dbReference>
<dbReference type="InterPro" id="IPR009010">
    <property type="entry name" value="Asp_de-COase-like_dom_sf"/>
</dbReference>
<dbReference type="InterPro" id="IPR006657">
    <property type="entry name" value="MoPterin_dinucl-bd_dom"/>
</dbReference>
<dbReference type="InterPro" id="IPR006656">
    <property type="entry name" value="Mopterin_OxRdtase"/>
</dbReference>
<dbReference type="InterPro" id="IPR006963">
    <property type="entry name" value="Mopterin_OxRdtase_4Fe-4S_dom"/>
</dbReference>
<dbReference type="InterPro" id="IPR006655">
    <property type="entry name" value="Mopterin_OxRdtase_prok_CS"/>
</dbReference>
<dbReference type="InterPro" id="IPR027467">
    <property type="entry name" value="MopterinOxRdtase_cofactor_BS"/>
</dbReference>
<dbReference type="InterPro" id="IPR050612">
    <property type="entry name" value="Prok_Mopterin_Oxidored"/>
</dbReference>
<dbReference type="InterPro" id="IPR006311">
    <property type="entry name" value="TAT_signal"/>
</dbReference>
<dbReference type="InterPro" id="IPR019546">
    <property type="entry name" value="TAT_signal_bac_arc"/>
</dbReference>
<dbReference type="NCBIfam" id="NF012032">
    <property type="entry name" value="PRK15488.1"/>
    <property type="match status" value="1"/>
</dbReference>
<dbReference type="NCBIfam" id="TIGR01409">
    <property type="entry name" value="TAT_signal_seq"/>
    <property type="match status" value="1"/>
</dbReference>
<dbReference type="PANTHER" id="PTHR43742:SF9">
    <property type="entry name" value="TETRATHIONATE REDUCTASE SUBUNIT A"/>
    <property type="match status" value="1"/>
</dbReference>
<dbReference type="PANTHER" id="PTHR43742">
    <property type="entry name" value="TRIMETHYLAMINE-N-OXIDE REDUCTASE"/>
    <property type="match status" value="1"/>
</dbReference>
<dbReference type="Pfam" id="PF04879">
    <property type="entry name" value="Molybdop_Fe4S4"/>
    <property type="match status" value="1"/>
</dbReference>
<dbReference type="Pfam" id="PF00384">
    <property type="entry name" value="Molybdopterin"/>
    <property type="match status" value="1"/>
</dbReference>
<dbReference type="Pfam" id="PF01568">
    <property type="entry name" value="Molydop_binding"/>
    <property type="match status" value="1"/>
</dbReference>
<dbReference type="SMART" id="SM00926">
    <property type="entry name" value="Molybdop_Fe4S4"/>
    <property type="match status" value="1"/>
</dbReference>
<dbReference type="SUPFAM" id="SSF50692">
    <property type="entry name" value="ADC-like"/>
    <property type="match status" value="1"/>
</dbReference>
<dbReference type="SUPFAM" id="SSF53706">
    <property type="entry name" value="Formate dehydrogenase/DMSO reductase, domains 1-3"/>
    <property type="match status" value="1"/>
</dbReference>
<dbReference type="PROSITE" id="PS51669">
    <property type="entry name" value="4FE4S_MOW_BIS_MGD"/>
    <property type="match status" value="1"/>
</dbReference>
<dbReference type="PROSITE" id="PS00551">
    <property type="entry name" value="MOLYBDOPTERIN_PROK_1"/>
    <property type="match status" value="1"/>
</dbReference>
<dbReference type="PROSITE" id="PS00490">
    <property type="entry name" value="MOLYBDOPTERIN_PROK_2"/>
    <property type="match status" value="1"/>
</dbReference>
<dbReference type="PROSITE" id="PS00932">
    <property type="entry name" value="MOLYBDOPTERIN_PROK_3"/>
    <property type="match status" value="1"/>
</dbReference>
<dbReference type="PROSITE" id="PS51318">
    <property type="entry name" value="TAT"/>
    <property type="match status" value="1"/>
</dbReference>
<evidence type="ECO:0000250" key="1">
    <source>
        <dbReference type="UniProtKB" id="P24183"/>
    </source>
</evidence>
<evidence type="ECO:0000255" key="2">
    <source>
        <dbReference type="PROSITE-ProRule" id="PRU00648"/>
    </source>
</evidence>
<evidence type="ECO:0000255" key="3">
    <source>
        <dbReference type="PROSITE-ProRule" id="PRU01004"/>
    </source>
</evidence>
<evidence type="ECO:0000269" key="4">
    <source>
    </source>
</evidence>
<evidence type="ECO:0000269" key="5">
    <source>
    </source>
</evidence>
<evidence type="ECO:0000303" key="6">
    <source>
    </source>
</evidence>
<evidence type="ECO:0000305" key="7"/>
<evidence type="ECO:0000305" key="8">
    <source>
    </source>
</evidence>
<accession>P37600</accession>
<protein>
    <recommendedName>
        <fullName evidence="7">Thiosulfate reductase molybdopterin-containing subunit PhsA</fullName>
        <ecNumber evidence="4">1.8.5.5</ecNumber>
    </recommendedName>
    <alternativeName>
        <fullName evidence="7">Thiosulfate reductase subunit alpha</fullName>
    </alternativeName>
</protein>